<name>EST3_DEBHA</name>
<feature type="chain" id="PRO_0000301753" description="Telomere replication protein EST3">
    <location>
        <begin position="1"/>
        <end position="202"/>
    </location>
</feature>
<proteinExistence type="inferred from homology"/>
<evidence type="ECO:0000250" key="1"/>
<evidence type="ECO:0000305" key="2"/>
<dbReference type="EMBL" id="CR382137">
    <property type="protein sequence ID" value="CAG87782.2"/>
    <property type="molecule type" value="Genomic_DNA"/>
</dbReference>
<dbReference type="RefSeq" id="XP_459555.2">
    <property type="nucleotide sequence ID" value="XM_459555.1"/>
</dbReference>
<dbReference type="FunCoup" id="Q6BQG5">
    <property type="interactions" value="46"/>
</dbReference>
<dbReference type="STRING" id="284592.Q6BQG5"/>
<dbReference type="GeneID" id="2902956"/>
<dbReference type="KEGG" id="dha:DEHA2E05434g"/>
<dbReference type="VEuPathDB" id="FungiDB:DEHA2E05434g"/>
<dbReference type="eggNOG" id="ENOG502RQ3Q">
    <property type="taxonomic scope" value="Eukaryota"/>
</dbReference>
<dbReference type="HOGENOM" id="CLU_1354578_0_0_1"/>
<dbReference type="InParanoid" id="Q6BQG5"/>
<dbReference type="OMA" id="ADSTHKI"/>
<dbReference type="OrthoDB" id="4083059at2759"/>
<dbReference type="Proteomes" id="UP000000599">
    <property type="component" value="Chromosome E"/>
</dbReference>
<dbReference type="GO" id="GO:0000781">
    <property type="term" value="C:chromosome, telomeric region"/>
    <property type="evidence" value="ECO:0007669"/>
    <property type="project" value="UniProtKB-SubCell"/>
</dbReference>
<dbReference type="GO" id="GO:0005697">
    <property type="term" value="C:telomerase holoenzyme complex"/>
    <property type="evidence" value="ECO:0007669"/>
    <property type="project" value="InterPro"/>
</dbReference>
<dbReference type="GO" id="GO:0042162">
    <property type="term" value="F:telomeric DNA binding"/>
    <property type="evidence" value="ECO:0007669"/>
    <property type="project" value="InterPro"/>
</dbReference>
<dbReference type="GO" id="GO:0007004">
    <property type="term" value="P:telomere maintenance via telomerase"/>
    <property type="evidence" value="ECO:0007669"/>
    <property type="project" value="InterPro"/>
</dbReference>
<dbReference type="Gene3D" id="2.40.50.960">
    <property type="match status" value="1"/>
</dbReference>
<dbReference type="InterPro" id="IPR019437">
    <property type="entry name" value="TPP1/Est3"/>
</dbReference>
<dbReference type="Pfam" id="PF10341">
    <property type="entry name" value="TPP1"/>
    <property type="match status" value="1"/>
</dbReference>
<gene>
    <name type="primary">EST3</name>
    <name type="ordered locus">DEHA2E05434g</name>
</gene>
<accession>Q6BQG5</accession>
<sequence length="202" mass="23303">MNVNIKYPLVLHDNWLLESITGQINKNVKYTNSLIKKDFISPSSISKTPILRILRFLKTTKSSDLTAILSDSTHTVIAIFPFDPAIINFEIRYKHRITYHTPNSLILIKQANLRFVNNVELTTEWGITIEDEIDVAVLEVLDLEIFQRDQIMLGVNIENNLQLIYYDKSYLNLCGKSRQRDSLGEKEIKEVISQSYDDVVSI</sequence>
<reference key="1">
    <citation type="journal article" date="2004" name="Nature">
        <title>Genome evolution in yeasts.</title>
        <authorList>
            <person name="Dujon B."/>
            <person name="Sherman D."/>
            <person name="Fischer G."/>
            <person name="Durrens P."/>
            <person name="Casaregola S."/>
            <person name="Lafontaine I."/>
            <person name="de Montigny J."/>
            <person name="Marck C."/>
            <person name="Neuveglise C."/>
            <person name="Talla E."/>
            <person name="Goffard N."/>
            <person name="Frangeul L."/>
            <person name="Aigle M."/>
            <person name="Anthouard V."/>
            <person name="Babour A."/>
            <person name="Barbe V."/>
            <person name="Barnay S."/>
            <person name="Blanchin S."/>
            <person name="Beckerich J.-M."/>
            <person name="Beyne E."/>
            <person name="Bleykasten C."/>
            <person name="Boisrame A."/>
            <person name="Boyer J."/>
            <person name="Cattolico L."/>
            <person name="Confanioleri F."/>
            <person name="de Daruvar A."/>
            <person name="Despons L."/>
            <person name="Fabre E."/>
            <person name="Fairhead C."/>
            <person name="Ferry-Dumazet H."/>
            <person name="Groppi A."/>
            <person name="Hantraye F."/>
            <person name="Hennequin C."/>
            <person name="Jauniaux N."/>
            <person name="Joyet P."/>
            <person name="Kachouri R."/>
            <person name="Kerrest A."/>
            <person name="Koszul R."/>
            <person name="Lemaire M."/>
            <person name="Lesur I."/>
            <person name="Ma L."/>
            <person name="Muller H."/>
            <person name="Nicaud J.-M."/>
            <person name="Nikolski M."/>
            <person name="Oztas S."/>
            <person name="Ozier-Kalogeropoulos O."/>
            <person name="Pellenz S."/>
            <person name="Potier S."/>
            <person name="Richard G.-F."/>
            <person name="Straub M.-L."/>
            <person name="Suleau A."/>
            <person name="Swennen D."/>
            <person name="Tekaia F."/>
            <person name="Wesolowski-Louvel M."/>
            <person name="Westhof E."/>
            <person name="Wirth B."/>
            <person name="Zeniou-Meyer M."/>
            <person name="Zivanovic Y."/>
            <person name="Bolotin-Fukuhara M."/>
            <person name="Thierry A."/>
            <person name="Bouchier C."/>
            <person name="Caudron B."/>
            <person name="Scarpelli C."/>
            <person name="Gaillardin C."/>
            <person name="Weissenbach J."/>
            <person name="Wincker P."/>
            <person name="Souciet J.-L."/>
        </authorList>
    </citation>
    <scope>NUCLEOTIDE SEQUENCE [LARGE SCALE GENOMIC DNA]</scope>
    <source>
        <strain>ATCC 36239 / CBS 767 / BCRC 21394 / JCM 1990 / NBRC 0083 / IGC 2968</strain>
    </source>
</reference>
<protein>
    <recommendedName>
        <fullName>Telomere replication protein EST3</fullName>
    </recommendedName>
</protein>
<organism>
    <name type="scientific">Debaryomyces hansenii (strain ATCC 36239 / CBS 767 / BCRC 21394 / JCM 1990 / NBRC 0083 / IGC 2968)</name>
    <name type="common">Yeast</name>
    <name type="synonym">Torulaspora hansenii</name>
    <dbReference type="NCBI Taxonomy" id="284592"/>
    <lineage>
        <taxon>Eukaryota</taxon>
        <taxon>Fungi</taxon>
        <taxon>Dikarya</taxon>
        <taxon>Ascomycota</taxon>
        <taxon>Saccharomycotina</taxon>
        <taxon>Pichiomycetes</taxon>
        <taxon>Debaryomycetaceae</taxon>
        <taxon>Debaryomyces</taxon>
    </lineage>
</organism>
<keyword id="KW-0158">Chromosome</keyword>
<keyword id="KW-0539">Nucleus</keyword>
<keyword id="KW-1185">Reference proteome</keyword>
<keyword id="KW-0779">Telomere</keyword>
<comment type="function">
    <text evidence="1">Component of the telomerase complex involved in telomere replication. Stimulates RNA/DNA heteroduplex unwinding which favors the telomere replication by the telomerase (By similarity).</text>
</comment>
<comment type="subunit">
    <text evidence="1">Component of the telomerase complex.</text>
</comment>
<comment type="subcellular location">
    <subcellularLocation>
        <location evidence="2">Nucleus</location>
    </subcellularLocation>
    <subcellularLocation>
        <location evidence="2">Chromosome</location>
        <location evidence="2">Telomere</location>
    </subcellularLocation>
</comment>
<comment type="similarity">
    <text evidence="2">Belongs to the EST3 family.</text>
</comment>